<organism>
    <name type="scientific">Shigella flexneri</name>
    <dbReference type="NCBI Taxonomy" id="623"/>
    <lineage>
        <taxon>Bacteria</taxon>
        <taxon>Pseudomonadati</taxon>
        <taxon>Pseudomonadota</taxon>
        <taxon>Gammaproteobacteria</taxon>
        <taxon>Enterobacterales</taxon>
        <taxon>Enterobacteriaceae</taxon>
        <taxon>Shigella</taxon>
    </lineage>
</organism>
<proteinExistence type="inferred from homology"/>
<comment type="function">
    <text evidence="2">Catalyzes the NADH-dependent reduction of 5,10-methylenetetrahydrofolate to 5-methyltetrahydrofolate. Is required to provide the methyl group necessary for methionine synthetase to convert homocysteine to methionine; the methyl group is given by 5-methyltetrahydrofolate.</text>
</comment>
<comment type="catalytic activity">
    <reaction evidence="2">
        <text>(6S)-5-methyl-5,6,7,8-tetrahydrofolate + NAD(+) = (6R)-5,10-methylene-5,6,7,8-tetrahydrofolate + NADH + H(+)</text>
        <dbReference type="Rhea" id="RHEA:19821"/>
        <dbReference type="ChEBI" id="CHEBI:15378"/>
        <dbReference type="ChEBI" id="CHEBI:15636"/>
        <dbReference type="ChEBI" id="CHEBI:18608"/>
        <dbReference type="ChEBI" id="CHEBI:57540"/>
        <dbReference type="ChEBI" id="CHEBI:57945"/>
        <dbReference type="EC" id="1.5.1.54"/>
    </reaction>
    <physiologicalReaction direction="right-to-left" evidence="2">
        <dbReference type="Rhea" id="RHEA:19823"/>
    </physiologicalReaction>
</comment>
<comment type="cofactor">
    <cofactor evidence="2">
        <name>FAD</name>
        <dbReference type="ChEBI" id="CHEBI:57692"/>
    </cofactor>
</comment>
<comment type="pathway">
    <text>One-carbon metabolism; tetrahydrofolate interconversion.</text>
</comment>
<comment type="pathway">
    <text evidence="2">Amino-acid biosynthesis; L-methionine biosynthesis via de novo pathway.</text>
</comment>
<comment type="subunit">
    <text evidence="1">Homotetramer.</text>
</comment>
<comment type="similarity">
    <text evidence="3">Belongs to the methylenetetrahydrofolate reductase family.</text>
</comment>
<gene>
    <name type="primary">metF</name>
    <name type="ordered locus">SF4019</name>
    <name type="ordered locus">S3728</name>
</gene>
<accession>P0AEZ2</accession>
<accession>P00394</accession>
<feature type="chain" id="PRO_0000190265" description="5,10-methylenetetrahydrofolate reductase">
    <location>
        <begin position="1"/>
        <end position="296"/>
    </location>
</feature>
<feature type="active site" description="Proton donor/acceptor" evidence="2">
    <location>
        <position position="28"/>
    </location>
</feature>
<feature type="binding site" evidence="2">
    <location>
        <position position="59"/>
    </location>
    <ligand>
        <name>NADH</name>
        <dbReference type="ChEBI" id="CHEBI:57945"/>
    </ligand>
</feature>
<feature type="binding site" evidence="2">
    <location>
        <position position="60"/>
    </location>
    <ligand>
        <name>FAD</name>
        <dbReference type="ChEBI" id="CHEBI:57692"/>
    </ligand>
</feature>
<feature type="binding site" evidence="2">
    <location>
        <position position="62"/>
    </location>
    <ligand>
        <name>FAD</name>
        <dbReference type="ChEBI" id="CHEBI:57692"/>
    </ligand>
</feature>
<feature type="binding site" evidence="2">
    <location>
        <position position="88"/>
    </location>
    <ligand>
        <name>FAD</name>
        <dbReference type="ChEBI" id="CHEBI:57692"/>
    </ligand>
</feature>
<feature type="binding site" evidence="2">
    <location>
        <position position="118"/>
    </location>
    <ligand>
        <name>FAD</name>
        <dbReference type="ChEBI" id="CHEBI:57692"/>
    </ligand>
</feature>
<feature type="binding site" evidence="2">
    <location>
        <position position="119"/>
    </location>
    <ligand>
        <name>FAD</name>
        <dbReference type="ChEBI" id="CHEBI:57692"/>
    </ligand>
</feature>
<feature type="binding site" evidence="2">
    <location>
        <position position="120"/>
    </location>
    <ligand>
        <name>(6S)-5-methyl-5,6,7,8-tetrahydrofolate</name>
        <dbReference type="ChEBI" id="CHEBI:18608"/>
    </ligand>
</feature>
<feature type="binding site" evidence="2">
    <location>
        <position position="120"/>
    </location>
    <ligand>
        <name>FAD</name>
        <dbReference type="ChEBI" id="CHEBI:57692"/>
    </ligand>
</feature>
<feature type="binding site" evidence="2">
    <location>
        <position position="132"/>
    </location>
    <ligand>
        <name>FAD</name>
        <dbReference type="ChEBI" id="CHEBI:57692"/>
    </ligand>
</feature>
<feature type="binding site" evidence="2">
    <location>
        <position position="152"/>
    </location>
    <ligand>
        <name>FAD</name>
        <dbReference type="ChEBI" id="CHEBI:57692"/>
    </ligand>
</feature>
<feature type="binding site" evidence="2">
    <location>
        <position position="156"/>
    </location>
    <ligand>
        <name>FAD</name>
        <dbReference type="ChEBI" id="CHEBI:57692"/>
    </ligand>
</feature>
<feature type="binding site" evidence="2">
    <location>
        <position position="159"/>
    </location>
    <ligand>
        <name>FAD</name>
        <dbReference type="ChEBI" id="CHEBI:57692"/>
    </ligand>
</feature>
<feature type="binding site" evidence="2">
    <location>
        <position position="165"/>
    </location>
    <ligand>
        <name>FAD</name>
        <dbReference type="ChEBI" id="CHEBI:57692"/>
    </ligand>
</feature>
<feature type="binding site" evidence="2">
    <location>
        <position position="168"/>
    </location>
    <ligand>
        <name>FAD</name>
        <dbReference type="ChEBI" id="CHEBI:57692"/>
    </ligand>
</feature>
<feature type="binding site" evidence="2">
    <location>
        <position position="171"/>
    </location>
    <ligand>
        <name>FAD</name>
        <dbReference type="ChEBI" id="CHEBI:57692"/>
    </ligand>
</feature>
<feature type="binding site" evidence="2">
    <location>
        <position position="172"/>
    </location>
    <ligand>
        <name>FAD</name>
        <dbReference type="ChEBI" id="CHEBI:57692"/>
    </ligand>
</feature>
<feature type="binding site" evidence="2">
    <location>
        <position position="183"/>
    </location>
    <ligand>
        <name>(6S)-5-methyl-5,6,7,8-tetrahydrofolate</name>
        <dbReference type="ChEBI" id="CHEBI:18608"/>
    </ligand>
</feature>
<feature type="binding site" evidence="2">
    <location>
        <position position="183"/>
    </location>
    <ligand>
        <name>NADH</name>
        <dbReference type="ChEBI" id="CHEBI:57945"/>
    </ligand>
</feature>
<feature type="binding site" evidence="2">
    <location>
        <position position="219"/>
    </location>
    <ligand>
        <name>(6S)-5-methyl-5,6,7,8-tetrahydrofolate</name>
        <dbReference type="ChEBI" id="CHEBI:18608"/>
    </ligand>
</feature>
<feature type="binding site" evidence="2">
    <location>
        <position position="279"/>
    </location>
    <ligand>
        <name>(6S)-5-methyl-5,6,7,8-tetrahydrofolate</name>
        <dbReference type="ChEBI" id="CHEBI:18608"/>
    </ligand>
</feature>
<reference key="1">
    <citation type="journal article" date="2002" name="Nucleic Acids Res.">
        <title>Genome sequence of Shigella flexneri 2a: insights into pathogenicity through comparison with genomes of Escherichia coli K12 and O157.</title>
        <authorList>
            <person name="Jin Q."/>
            <person name="Yuan Z."/>
            <person name="Xu J."/>
            <person name="Wang Y."/>
            <person name="Shen Y."/>
            <person name="Lu W."/>
            <person name="Wang J."/>
            <person name="Liu H."/>
            <person name="Yang J."/>
            <person name="Yang F."/>
            <person name="Zhang X."/>
            <person name="Zhang J."/>
            <person name="Yang G."/>
            <person name="Wu H."/>
            <person name="Qu D."/>
            <person name="Dong J."/>
            <person name="Sun L."/>
            <person name="Xue Y."/>
            <person name="Zhao A."/>
            <person name="Gao Y."/>
            <person name="Zhu J."/>
            <person name="Kan B."/>
            <person name="Ding K."/>
            <person name="Chen S."/>
            <person name="Cheng H."/>
            <person name="Yao Z."/>
            <person name="He B."/>
            <person name="Chen R."/>
            <person name="Ma D."/>
            <person name="Qiang B."/>
            <person name="Wen Y."/>
            <person name="Hou Y."/>
            <person name="Yu J."/>
        </authorList>
    </citation>
    <scope>NUCLEOTIDE SEQUENCE [LARGE SCALE GENOMIC DNA]</scope>
    <source>
        <strain>301 / Serotype 2a</strain>
    </source>
</reference>
<reference key="2">
    <citation type="journal article" date="2003" name="Infect. Immun.">
        <title>Complete genome sequence and comparative genomics of Shigella flexneri serotype 2a strain 2457T.</title>
        <authorList>
            <person name="Wei J."/>
            <person name="Goldberg M.B."/>
            <person name="Burland V."/>
            <person name="Venkatesan M.M."/>
            <person name="Deng W."/>
            <person name="Fournier G."/>
            <person name="Mayhew G.F."/>
            <person name="Plunkett G. III"/>
            <person name="Rose D.J."/>
            <person name="Darling A."/>
            <person name="Mau B."/>
            <person name="Perna N.T."/>
            <person name="Payne S.M."/>
            <person name="Runyen-Janecky L.J."/>
            <person name="Zhou S."/>
            <person name="Schwartz D.C."/>
            <person name="Blattner F.R."/>
        </authorList>
    </citation>
    <scope>NUCLEOTIDE SEQUENCE [LARGE SCALE GENOMIC DNA]</scope>
    <source>
        <strain>ATCC 700930 / 2457T / Serotype 2a</strain>
    </source>
</reference>
<dbReference type="EC" id="1.5.1.54" evidence="2"/>
<dbReference type="EMBL" id="AE005674">
    <property type="protein sequence ID" value="AAN45452.1"/>
    <property type="molecule type" value="Genomic_DNA"/>
</dbReference>
<dbReference type="EMBL" id="AE014073">
    <property type="protein sequence ID" value="AAP18748.1"/>
    <property type="molecule type" value="Genomic_DNA"/>
</dbReference>
<dbReference type="RefSeq" id="NP_709745.1">
    <property type="nucleotide sequence ID" value="NC_004337.2"/>
</dbReference>
<dbReference type="RefSeq" id="WP_000007523.1">
    <property type="nucleotide sequence ID" value="NZ_WPGW01000012.1"/>
</dbReference>
<dbReference type="SMR" id="P0AEZ2"/>
<dbReference type="STRING" id="198214.SF4019"/>
<dbReference type="PaxDb" id="198214-SF4019"/>
<dbReference type="GeneID" id="1027371"/>
<dbReference type="GeneID" id="93777951"/>
<dbReference type="KEGG" id="sfl:SF4019"/>
<dbReference type="KEGG" id="sfx:S3728"/>
<dbReference type="PATRIC" id="fig|198214.7.peg.4736"/>
<dbReference type="HOGENOM" id="CLU_025841_0_0_6"/>
<dbReference type="UniPathway" id="UPA00051"/>
<dbReference type="UniPathway" id="UPA00193"/>
<dbReference type="Proteomes" id="UP000001006">
    <property type="component" value="Chromosome"/>
</dbReference>
<dbReference type="Proteomes" id="UP000002673">
    <property type="component" value="Chromosome"/>
</dbReference>
<dbReference type="GO" id="GO:0005829">
    <property type="term" value="C:cytosol"/>
    <property type="evidence" value="ECO:0007669"/>
    <property type="project" value="InterPro"/>
</dbReference>
<dbReference type="GO" id="GO:0071949">
    <property type="term" value="F:FAD binding"/>
    <property type="evidence" value="ECO:0007669"/>
    <property type="project" value="TreeGrafter"/>
</dbReference>
<dbReference type="GO" id="GO:0106312">
    <property type="term" value="F:methylenetetrahydrofolate reductase (NADH) activity"/>
    <property type="evidence" value="ECO:0007669"/>
    <property type="project" value="RHEA"/>
</dbReference>
<dbReference type="GO" id="GO:0009086">
    <property type="term" value="P:methionine biosynthetic process"/>
    <property type="evidence" value="ECO:0007669"/>
    <property type="project" value="UniProtKB-KW"/>
</dbReference>
<dbReference type="GO" id="GO:0035999">
    <property type="term" value="P:tetrahydrofolate interconversion"/>
    <property type="evidence" value="ECO:0007669"/>
    <property type="project" value="UniProtKB-UniPathway"/>
</dbReference>
<dbReference type="CDD" id="cd00537">
    <property type="entry name" value="MTHFR"/>
    <property type="match status" value="1"/>
</dbReference>
<dbReference type="FunFam" id="3.20.20.220:FF:000001">
    <property type="entry name" value="Methylenetetrahydrofolate reductase"/>
    <property type="match status" value="1"/>
</dbReference>
<dbReference type="Gene3D" id="3.20.20.220">
    <property type="match status" value="1"/>
</dbReference>
<dbReference type="InterPro" id="IPR029041">
    <property type="entry name" value="FAD-linked_oxidoreductase-like"/>
</dbReference>
<dbReference type="InterPro" id="IPR003171">
    <property type="entry name" value="Mehydrof_redctse-like"/>
</dbReference>
<dbReference type="InterPro" id="IPR004620">
    <property type="entry name" value="MTHF_reductase_bac"/>
</dbReference>
<dbReference type="NCBIfam" id="TIGR00676">
    <property type="entry name" value="fadh2"/>
    <property type="match status" value="1"/>
</dbReference>
<dbReference type="NCBIfam" id="NF006950">
    <property type="entry name" value="PRK09432.1"/>
    <property type="match status" value="1"/>
</dbReference>
<dbReference type="PANTHER" id="PTHR45754">
    <property type="entry name" value="METHYLENETETRAHYDROFOLATE REDUCTASE"/>
    <property type="match status" value="1"/>
</dbReference>
<dbReference type="PANTHER" id="PTHR45754:SF3">
    <property type="entry name" value="METHYLENETETRAHYDROFOLATE REDUCTASE (NADPH)"/>
    <property type="match status" value="1"/>
</dbReference>
<dbReference type="Pfam" id="PF02219">
    <property type="entry name" value="MTHFR"/>
    <property type="match status" value="1"/>
</dbReference>
<dbReference type="SUPFAM" id="SSF51730">
    <property type="entry name" value="FAD-linked oxidoreductase"/>
    <property type="match status" value="1"/>
</dbReference>
<sequence>MSFFHASQRDALNQSLAEVQGQINVSFEFFPPRTSEMEQTLWNSIDRLSSLKPKFVSVTYGANSGERDRTHSIIKGIKDRTGLEAAPHLTCIDATPDELRTIARDYWNNGIRHIVALRGDLPPGSGKPEMYASDLVTLLKEVADFDISVAAYPEVHPEAKSAQADLLNLKRKVDAGANRAITQFFFDVESYLRFRDRCVSAGIDVEIIPGILPVSNFKQAKKFADMTNVRIPAWMAQMFDGLDDDAETRKLVGANIAMDMVKILSREGVKDFHFYTLNRAEMSYAICHTLGVRPGL</sequence>
<evidence type="ECO:0000250" key="1"/>
<evidence type="ECO:0000250" key="2">
    <source>
        <dbReference type="UniProtKB" id="P0AEZ1"/>
    </source>
</evidence>
<evidence type="ECO:0000305" key="3"/>
<keyword id="KW-0028">Amino-acid biosynthesis</keyword>
<keyword id="KW-0274">FAD</keyword>
<keyword id="KW-0285">Flavoprotein</keyword>
<keyword id="KW-0486">Methionine biosynthesis</keyword>
<keyword id="KW-0520">NAD</keyword>
<keyword id="KW-0560">Oxidoreductase</keyword>
<keyword id="KW-1185">Reference proteome</keyword>
<protein>
    <recommendedName>
        <fullName>5,10-methylenetetrahydrofolate reductase</fullName>
        <ecNumber evidence="2">1.5.1.54</ecNumber>
    </recommendedName>
</protein>
<name>METF_SHIFL</name>